<proteinExistence type="inferred from homology"/>
<feature type="chain" id="PRO_0000330136" description="Assembly factor CBP4">
    <location>
        <begin position="1"/>
        <end position="147"/>
    </location>
</feature>
<feature type="transmembrane region" description="Helical" evidence="2">
    <location>
        <begin position="13"/>
        <end position="32"/>
    </location>
</feature>
<feature type="coiled-coil region" evidence="2">
    <location>
        <begin position="88"/>
        <end position="139"/>
    </location>
</feature>
<comment type="function">
    <text evidence="1">Essential for the assembly of ubiquinol-cytochrome c reductase. It has a direct effect on the correct occurrence of the Rieske protein, core 4, core 5 and apocytochrome b (By similarity).</text>
</comment>
<comment type="subcellular location">
    <subcellularLocation>
        <location evidence="1">Mitochondrion inner membrane</location>
        <topology evidence="1">Single-pass membrane protein</topology>
    </subcellularLocation>
</comment>
<comment type="similarity">
    <text evidence="3">Belongs to the CBP4 family.</text>
</comment>
<sequence>MSAKPLWYRWARVYFAGSCIIGTGVLCFIYTTPTDEQLIASFSPEIREDYEKNKAYRQREQQELMEIVKKTSQSDEPVWKTGPIGSPLEKEQRNLNQQLIDYNQFEKKRAEEYQREQIDKAQEELLEVEKLAAQAKKGYWWNPFSSK</sequence>
<gene>
    <name type="primary">CBP4</name>
    <name type="ORF">PICST_55406</name>
</gene>
<evidence type="ECO:0000250" key="1"/>
<evidence type="ECO:0000255" key="2"/>
<evidence type="ECO:0000305" key="3"/>
<reference key="1">
    <citation type="journal article" date="2007" name="Nat. Biotechnol.">
        <title>Genome sequence of the lignocellulose-bioconverting and xylose-fermenting yeast Pichia stipitis.</title>
        <authorList>
            <person name="Jeffries T.W."/>
            <person name="Grigoriev I.V."/>
            <person name="Grimwood J."/>
            <person name="Laplaza J.M."/>
            <person name="Aerts A."/>
            <person name="Salamov A."/>
            <person name="Schmutz J."/>
            <person name="Lindquist E."/>
            <person name="Dehal P."/>
            <person name="Shapiro H."/>
            <person name="Jin Y.-S."/>
            <person name="Passoth V."/>
            <person name="Richardson P.M."/>
        </authorList>
    </citation>
    <scope>NUCLEOTIDE SEQUENCE [LARGE SCALE GENOMIC DNA]</scope>
    <source>
        <strain>ATCC 58785 / CBS 6054 / NBRC 10063 / NRRL Y-11545</strain>
    </source>
</reference>
<name>CBP4_PICST</name>
<protein>
    <recommendedName>
        <fullName>Assembly factor CBP4</fullName>
    </recommendedName>
    <alternativeName>
        <fullName>Cytochrome b mRNA-processing protein 4</fullName>
    </alternativeName>
</protein>
<organism>
    <name type="scientific">Scheffersomyces stipitis (strain ATCC 58785 / CBS 6054 / NBRC 10063 / NRRL Y-11545)</name>
    <name type="common">Yeast</name>
    <name type="synonym">Pichia stipitis</name>
    <dbReference type="NCBI Taxonomy" id="322104"/>
    <lineage>
        <taxon>Eukaryota</taxon>
        <taxon>Fungi</taxon>
        <taxon>Dikarya</taxon>
        <taxon>Ascomycota</taxon>
        <taxon>Saccharomycotina</taxon>
        <taxon>Pichiomycetes</taxon>
        <taxon>Debaryomycetaceae</taxon>
        <taxon>Scheffersomyces</taxon>
    </lineage>
</organism>
<keyword id="KW-0143">Chaperone</keyword>
<keyword id="KW-0175">Coiled coil</keyword>
<keyword id="KW-0472">Membrane</keyword>
<keyword id="KW-0496">Mitochondrion</keyword>
<keyword id="KW-0999">Mitochondrion inner membrane</keyword>
<keyword id="KW-1185">Reference proteome</keyword>
<keyword id="KW-0812">Transmembrane</keyword>
<keyword id="KW-1133">Transmembrane helix</keyword>
<dbReference type="EMBL" id="CP000496">
    <property type="protein sequence ID" value="ABN65190.1"/>
    <property type="molecule type" value="Genomic_DNA"/>
</dbReference>
<dbReference type="RefSeq" id="XP_001383219.1">
    <property type="nucleotide sequence ID" value="XM_001383182.1"/>
</dbReference>
<dbReference type="SMR" id="A3LQD9"/>
<dbReference type="FunCoup" id="A3LQD9">
    <property type="interactions" value="45"/>
</dbReference>
<dbReference type="STRING" id="322104.A3LQD9"/>
<dbReference type="GeneID" id="4836667"/>
<dbReference type="KEGG" id="pic:PICST_55406"/>
<dbReference type="eggNOG" id="ENOG502S2G8">
    <property type="taxonomic scope" value="Eukaryota"/>
</dbReference>
<dbReference type="HOGENOM" id="CLU_147520_0_0_1"/>
<dbReference type="InParanoid" id="A3LQD9"/>
<dbReference type="OMA" id="KDPIWKT"/>
<dbReference type="OrthoDB" id="5576752at2759"/>
<dbReference type="Proteomes" id="UP000002258">
    <property type="component" value="Chromosome 2"/>
</dbReference>
<dbReference type="GO" id="GO:0005743">
    <property type="term" value="C:mitochondrial inner membrane"/>
    <property type="evidence" value="ECO:0007669"/>
    <property type="project" value="UniProtKB-SubCell"/>
</dbReference>
<dbReference type="GO" id="GO:0034551">
    <property type="term" value="P:mitochondrial respiratory chain complex III assembly"/>
    <property type="evidence" value="ECO:0007669"/>
    <property type="project" value="TreeGrafter"/>
</dbReference>
<dbReference type="InterPro" id="IPR012420">
    <property type="entry name" value="Cbp4"/>
</dbReference>
<dbReference type="PANTHER" id="PTHR28202">
    <property type="entry name" value="ASSEMBLY FACTOR CBP4"/>
    <property type="match status" value="1"/>
</dbReference>
<dbReference type="PANTHER" id="PTHR28202:SF1">
    <property type="entry name" value="ASSEMBLY FACTOR CBP4"/>
    <property type="match status" value="1"/>
</dbReference>
<dbReference type="Pfam" id="PF07960">
    <property type="entry name" value="CBP4"/>
    <property type="match status" value="1"/>
</dbReference>
<accession>A3LQD9</accession>